<gene>
    <name evidence="1" type="primary">pyrB1</name>
    <name type="ordered locus">Shal_0654</name>
</gene>
<organism>
    <name type="scientific">Shewanella halifaxensis (strain HAW-EB4)</name>
    <dbReference type="NCBI Taxonomy" id="458817"/>
    <lineage>
        <taxon>Bacteria</taxon>
        <taxon>Pseudomonadati</taxon>
        <taxon>Pseudomonadota</taxon>
        <taxon>Gammaproteobacteria</taxon>
        <taxon>Alteromonadales</taxon>
        <taxon>Shewanellaceae</taxon>
        <taxon>Shewanella</taxon>
    </lineage>
</organism>
<feature type="chain" id="PRO_0000334593" description="Aspartate carbamoyltransferase catalytic subunit 1">
    <location>
        <begin position="1"/>
        <end position="310"/>
    </location>
</feature>
<feature type="binding site" evidence="1">
    <location>
        <position position="55"/>
    </location>
    <ligand>
        <name>carbamoyl phosphate</name>
        <dbReference type="ChEBI" id="CHEBI:58228"/>
    </ligand>
</feature>
<feature type="binding site" evidence="1">
    <location>
        <position position="56"/>
    </location>
    <ligand>
        <name>carbamoyl phosphate</name>
        <dbReference type="ChEBI" id="CHEBI:58228"/>
    </ligand>
</feature>
<feature type="binding site" evidence="1">
    <location>
        <position position="85"/>
    </location>
    <ligand>
        <name>L-aspartate</name>
        <dbReference type="ChEBI" id="CHEBI:29991"/>
    </ligand>
</feature>
<feature type="binding site" evidence="1">
    <location>
        <position position="106"/>
    </location>
    <ligand>
        <name>carbamoyl phosphate</name>
        <dbReference type="ChEBI" id="CHEBI:58228"/>
    </ligand>
</feature>
<feature type="binding site" evidence="1">
    <location>
        <position position="134"/>
    </location>
    <ligand>
        <name>carbamoyl phosphate</name>
        <dbReference type="ChEBI" id="CHEBI:58228"/>
    </ligand>
</feature>
<feature type="binding site" evidence="1">
    <location>
        <position position="137"/>
    </location>
    <ligand>
        <name>carbamoyl phosphate</name>
        <dbReference type="ChEBI" id="CHEBI:58228"/>
    </ligand>
</feature>
<feature type="binding site" evidence="1">
    <location>
        <position position="167"/>
    </location>
    <ligand>
        <name>L-aspartate</name>
        <dbReference type="ChEBI" id="CHEBI:29991"/>
    </ligand>
</feature>
<feature type="binding site" evidence="1">
    <location>
        <position position="228"/>
    </location>
    <ligand>
        <name>L-aspartate</name>
        <dbReference type="ChEBI" id="CHEBI:29991"/>
    </ligand>
</feature>
<feature type="binding site" evidence="1">
    <location>
        <position position="266"/>
    </location>
    <ligand>
        <name>carbamoyl phosphate</name>
        <dbReference type="ChEBI" id="CHEBI:58228"/>
    </ligand>
</feature>
<feature type="binding site" evidence="1">
    <location>
        <position position="267"/>
    </location>
    <ligand>
        <name>carbamoyl phosphate</name>
        <dbReference type="ChEBI" id="CHEBI:58228"/>
    </ligand>
</feature>
<evidence type="ECO:0000255" key="1">
    <source>
        <dbReference type="HAMAP-Rule" id="MF_00001"/>
    </source>
</evidence>
<protein>
    <recommendedName>
        <fullName evidence="1">Aspartate carbamoyltransferase catalytic subunit 1</fullName>
        <ecNumber evidence="1">2.1.3.2</ecNumber>
    </recommendedName>
    <alternativeName>
        <fullName evidence="1">Aspartate transcarbamylase 1</fullName>
        <shortName evidence="1">ATCase 1</shortName>
    </alternativeName>
</protein>
<proteinExistence type="inferred from homology"/>
<reference key="1">
    <citation type="submission" date="2008-01" db="EMBL/GenBank/DDBJ databases">
        <title>Complete sequence of Shewanella halifaxensis HAW-EB4.</title>
        <authorList>
            <consortium name="US DOE Joint Genome Institute"/>
            <person name="Copeland A."/>
            <person name="Lucas S."/>
            <person name="Lapidus A."/>
            <person name="Glavina del Rio T."/>
            <person name="Dalin E."/>
            <person name="Tice H."/>
            <person name="Bruce D."/>
            <person name="Goodwin L."/>
            <person name="Pitluck S."/>
            <person name="Sims D."/>
            <person name="Brettin T."/>
            <person name="Detter J.C."/>
            <person name="Han C."/>
            <person name="Kuske C.R."/>
            <person name="Schmutz J."/>
            <person name="Larimer F."/>
            <person name="Land M."/>
            <person name="Hauser L."/>
            <person name="Kyrpides N."/>
            <person name="Kim E."/>
            <person name="Zhao J.-S."/>
            <person name="Richardson P."/>
        </authorList>
    </citation>
    <scope>NUCLEOTIDE SEQUENCE [LARGE SCALE GENOMIC DNA]</scope>
    <source>
        <strain>HAW-EB4</strain>
    </source>
</reference>
<keyword id="KW-0665">Pyrimidine biosynthesis</keyword>
<keyword id="KW-0808">Transferase</keyword>
<sequence>MSNPLYNKNIISITDLSRAELELIVSTANELKQHPRPDLLKNKVIASCFFEASTRTRLSFETAVQRLGGSVIGFPDSGNTSLGKKGETLADSVQVISSYSDAFFMRHNQEGAARLASEFSSVPVINGGDGSNQHPTQTLLDLFSIYETQGTLDKLQVAFVGDLKYGRTVHSLTQALSLFDCEFHFVAPPALSMPEYIIDELKEKGCTFTQYDSLDGVLSKLDILYMTRVQKERFDETEYQHMKSSFILTAQMFEGVKDNLKVLHPLPRVDEITTDVDSTPYAYYFQQAKNGVYARQALLALVLTNEFGDK</sequence>
<dbReference type="EC" id="2.1.3.2" evidence="1"/>
<dbReference type="EMBL" id="CP000931">
    <property type="protein sequence ID" value="ABZ75229.1"/>
    <property type="molecule type" value="Genomic_DNA"/>
</dbReference>
<dbReference type="RefSeq" id="WP_012275783.1">
    <property type="nucleotide sequence ID" value="NC_010334.1"/>
</dbReference>
<dbReference type="SMR" id="B0TSQ4"/>
<dbReference type="STRING" id="458817.Shal_0654"/>
<dbReference type="KEGG" id="shl:Shal_0654"/>
<dbReference type="eggNOG" id="COG0540">
    <property type="taxonomic scope" value="Bacteria"/>
</dbReference>
<dbReference type="HOGENOM" id="CLU_043846_1_2_6"/>
<dbReference type="OrthoDB" id="9774690at2"/>
<dbReference type="UniPathway" id="UPA00070">
    <property type="reaction ID" value="UER00116"/>
</dbReference>
<dbReference type="Proteomes" id="UP000001317">
    <property type="component" value="Chromosome"/>
</dbReference>
<dbReference type="GO" id="GO:0005829">
    <property type="term" value="C:cytosol"/>
    <property type="evidence" value="ECO:0007669"/>
    <property type="project" value="TreeGrafter"/>
</dbReference>
<dbReference type="GO" id="GO:0016597">
    <property type="term" value="F:amino acid binding"/>
    <property type="evidence" value="ECO:0007669"/>
    <property type="project" value="InterPro"/>
</dbReference>
<dbReference type="GO" id="GO:0004070">
    <property type="term" value="F:aspartate carbamoyltransferase activity"/>
    <property type="evidence" value="ECO:0007669"/>
    <property type="project" value="UniProtKB-UniRule"/>
</dbReference>
<dbReference type="GO" id="GO:0006207">
    <property type="term" value="P:'de novo' pyrimidine nucleobase biosynthetic process"/>
    <property type="evidence" value="ECO:0007669"/>
    <property type="project" value="InterPro"/>
</dbReference>
<dbReference type="GO" id="GO:0044205">
    <property type="term" value="P:'de novo' UMP biosynthetic process"/>
    <property type="evidence" value="ECO:0007669"/>
    <property type="project" value="UniProtKB-UniRule"/>
</dbReference>
<dbReference type="GO" id="GO:0006520">
    <property type="term" value="P:amino acid metabolic process"/>
    <property type="evidence" value="ECO:0007669"/>
    <property type="project" value="InterPro"/>
</dbReference>
<dbReference type="FunFam" id="3.40.50.1370:FF:000001">
    <property type="entry name" value="Aspartate carbamoyltransferase"/>
    <property type="match status" value="1"/>
</dbReference>
<dbReference type="FunFam" id="3.40.50.1370:FF:000002">
    <property type="entry name" value="Aspartate carbamoyltransferase 2"/>
    <property type="match status" value="1"/>
</dbReference>
<dbReference type="Gene3D" id="3.40.50.1370">
    <property type="entry name" value="Aspartate/ornithine carbamoyltransferase"/>
    <property type="match status" value="2"/>
</dbReference>
<dbReference type="HAMAP" id="MF_00001">
    <property type="entry name" value="Asp_carb_tr"/>
    <property type="match status" value="1"/>
</dbReference>
<dbReference type="InterPro" id="IPR006132">
    <property type="entry name" value="Asp/Orn_carbamoyltranf_P-bd"/>
</dbReference>
<dbReference type="InterPro" id="IPR006130">
    <property type="entry name" value="Asp/Orn_carbamoylTrfase"/>
</dbReference>
<dbReference type="InterPro" id="IPR036901">
    <property type="entry name" value="Asp/Orn_carbamoylTrfase_sf"/>
</dbReference>
<dbReference type="InterPro" id="IPR002082">
    <property type="entry name" value="Asp_carbamoyltransf"/>
</dbReference>
<dbReference type="InterPro" id="IPR006131">
    <property type="entry name" value="Asp_carbamoyltransf_Asp/Orn-bd"/>
</dbReference>
<dbReference type="NCBIfam" id="TIGR00670">
    <property type="entry name" value="asp_carb_tr"/>
    <property type="match status" value="1"/>
</dbReference>
<dbReference type="NCBIfam" id="NF002032">
    <property type="entry name" value="PRK00856.1"/>
    <property type="match status" value="1"/>
</dbReference>
<dbReference type="PANTHER" id="PTHR45753:SF6">
    <property type="entry name" value="ASPARTATE CARBAMOYLTRANSFERASE"/>
    <property type="match status" value="1"/>
</dbReference>
<dbReference type="PANTHER" id="PTHR45753">
    <property type="entry name" value="ORNITHINE CARBAMOYLTRANSFERASE, MITOCHONDRIAL"/>
    <property type="match status" value="1"/>
</dbReference>
<dbReference type="Pfam" id="PF00185">
    <property type="entry name" value="OTCace"/>
    <property type="match status" value="1"/>
</dbReference>
<dbReference type="Pfam" id="PF02729">
    <property type="entry name" value="OTCace_N"/>
    <property type="match status" value="1"/>
</dbReference>
<dbReference type="PRINTS" id="PR00100">
    <property type="entry name" value="AOTCASE"/>
</dbReference>
<dbReference type="PRINTS" id="PR00101">
    <property type="entry name" value="ATCASE"/>
</dbReference>
<dbReference type="SUPFAM" id="SSF53671">
    <property type="entry name" value="Aspartate/ornithine carbamoyltransferase"/>
    <property type="match status" value="1"/>
</dbReference>
<dbReference type="PROSITE" id="PS00097">
    <property type="entry name" value="CARBAMOYLTRANSFERASE"/>
    <property type="match status" value="1"/>
</dbReference>
<comment type="function">
    <text evidence="1">Catalyzes the condensation of carbamoyl phosphate and aspartate to form carbamoyl aspartate and inorganic phosphate, the committed step in the de novo pyrimidine nucleotide biosynthesis pathway.</text>
</comment>
<comment type="catalytic activity">
    <reaction evidence="1">
        <text>carbamoyl phosphate + L-aspartate = N-carbamoyl-L-aspartate + phosphate + H(+)</text>
        <dbReference type="Rhea" id="RHEA:20013"/>
        <dbReference type="ChEBI" id="CHEBI:15378"/>
        <dbReference type="ChEBI" id="CHEBI:29991"/>
        <dbReference type="ChEBI" id="CHEBI:32814"/>
        <dbReference type="ChEBI" id="CHEBI:43474"/>
        <dbReference type="ChEBI" id="CHEBI:58228"/>
        <dbReference type="EC" id="2.1.3.2"/>
    </reaction>
</comment>
<comment type="pathway">
    <text evidence="1">Pyrimidine metabolism; UMP biosynthesis via de novo pathway; (S)-dihydroorotate from bicarbonate: step 2/3.</text>
</comment>
<comment type="subunit">
    <text evidence="1">Heterododecamer (2C3:3R2) of six catalytic PyrB chains organized as two trimers (C3), and six regulatory PyrI chains organized as three dimers (R2).</text>
</comment>
<comment type="similarity">
    <text evidence="1">Belongs to the aspartate/ornithine carbamoyltransferase superfamily. ATCase family.</text>
</comment>
<accession>B0TSQ4</accession>
<name>PYRB1_SHEHH</name>